<organism>
    <name type="scientific">Prochlorococcus marinus (strain MIT 9301)</name>
    <dbReference type="NCBI Taxonomy" id="167546"/>
    <lineage>
        <taxon>Bacteria</taxon>
        <taxon>Bacillati</taxon>
        <taxon>Cyanobacteriota</taxon>
        <taxon>Cyanophyceae</taxon>
        <taxon>Synechococcales</taxon>
        <taxon>Prochlorococcaceae</taxon>
        <taxon>Prochlorococcus</taxon>
    </lineage>
</organism>
<protein>
    <recommendedName>
        <fullName evidence="1">ATP synthase subunit delta</fullName>
    </recommendedName>
    <alternativeName>
        <fullName evidence="1">ATP synthase F(1) sector subunit delta</fullName>
    </alternativeName>
    <alternativeName>
        <fullName evidence="1">F-type ATPase subunit delta</fullName>
        <shortName evidence="1">F-ATPase subunit delta</shortName>
    </alternativeName>
</protein>
<comment type="function">
    <text evidence="1">F(1)F(0) ATP synthase produces ATP from ADP in the presence of a proton or sodium gradient. F-type ATPases consist of two structural domains, F(1) containing the extramembraneous catalytic core and F(0) containing the membrane proton channel, linked together by a central stalk and a peripheral stalk. During catalysis, ATP synthesis in the catalytic domain of F(1) is coupled via a rotary mechanism of the central stalk subunits to proton translocation.</text>
</comment>
<comment type="function">
    <text evidence="1">This protein is part of the stalk that links CF(0) to CF(1). It either transmits conformational changes from CF(0) to CF(1) or is implicated in proton conduction.</text>
</comment>
<comment type="subunit">
    <text evidence="1">F-type ATPases have 2 components, F(1) - the catalytic core - and F(0) - the membrane proton channel. F(1) has five subunits: alpha(3), beta(3), gamma(1), delta(1), epsilon(1). CF(0) has four main subunits: a(1), b(1), b'(1) and c(10-14). The alpha and beta chains form an alternating ring which encloses part of the gamma chain. F(1) is attached to F(0) by a central stalk formed by the gamma and epsilon chains, while a peripheral stalk is formed by the delta, b and b' chains.</text>
</comment>
<comment type="subcellular location">
    <subcellularLocation>
        <location evidence="1">Cellular thylakoid membrane</location>
        <topology evidence="1">Peripheral membrane protein</topology>
    </subcellularLocation>
</comment>
<comment type="similarity">
    <text evidence="1">Belongs to the ATPase delta chain family.</text>
</comment>
<dbReference type="EMBL" id="CP000576">
    <property type="protein sequence ID" value="ABO18265.1"/>
    <property type="molecule type" value="Genomic_DNA"/>
</dbReference>
<dbReference type="RefSeq" id="WP_011863564.1">
    <property type="nucleotide sequence ID" value="NC_009091.1"/>
</dbReference>
<dbReference type="SMR" id="A3PEU0"/>
<dbReference type="STRING" id="167546.P9301_16421"/>
<dbReference type="KEGG" id="pmg:P9301_16421"/>
<dbReference type="eggNOG" id="COG0712">
    <property type="taxonomic scope" value="Bacteria"/>
</dbReference>
<dbReference type="HOGENOM" id="CLU_085114_1_1_3"/>
<dbReference type="OrthoDB" id="9802471at2"/>
<dbReference type="Proteomes" id="UP000001430">
    <property type="component" value="Chromosome"/>
</dbReference>
<dbReference type="GO" id="GO:0031676">
    <property type="term" value="C:plasma membrane-derived thylakoid membrane"/>
    <property type="evidence" value="ECO:0007669"/>
    <property type="project" value="UniProtKB-SubCell"/>
</dbReference>
<dbReference type="GO" id="GO:0045259">
    <property type="term" value="C:proton-transporting ATP synthase complex"/>
    <property type="evidence" value="ECO:0007669"/>
    <property type="project" value="UniProtKB-KW"/>
</dbReference>
<dbReference type="GO" id="GO:0046933">
    <property type="term" value="F:proton-transporting ATP synthase activity, rotational mechanism"/>
    <property type="evidence" value="ECO:0007669"/>
    <property type="project" value="UniProtKB-UniRule"/>
</dbReference>
<dbReference type="Gene3D" id="1.10.520.20">
    <property type="entry name" value="N-terminal domain of the delta subunit of the F1F0-ATP synthase"/>
    <property type="match status" value="1"/>
</dbReference>
<dbReference type="HAMAP" id="MF_01416">
    <property type="entry name" value="ATP_synth_delta_bact"/>
    <property type="match status" value="1"/>
</dbReference>
<dbReference type="InterPro" id="IPR026015">
    <property type="entry name" value="ATP_synth_OSCP/delta_N_sf"/>
</dbReference>
<dbReference type="InterPro" id="IPR000711">
    <property type="entry name" value="ATPase_OSCP/dsu"/>
</dbReference>
<dbReference type="NCBIfam" id="TIGR01145">
    <property type="entry name" value="ATP_synt_delta"/>
    <property type="match status" value="1"/>
</dbReference>
<dbReference type="PANTHER" id="PTHR11910">
    <property type="entry name" value="ATP SYNTHASE DELTA CHAIN"/>
    <property type="match status" value="1"/>
</dbReference>
<dbReference type="Pfam" id="PF00213">
    <property type="entry name" value="OSCP"/>
    <property type="match status" value="1"/>
</dbReference>
<dbReference type="PRINTS" id="PR00125">
    <property type="entry name" value="ATPASEDELTA"/>
</dbReference>
<dbReference type="SUPFAM" id="SSF47928">
    <property type="entry name" value="N-terminal domain of the delta subunit of the F1F0-ATP synthase"/>
    <property type="match status" value="1"/>
</dbReference>
<reference key="1">
    <citation type="journal article" date="2007" name="PLoS Genet.">
        <title>Patterns and implications of gene gain and loss in the evolution of Prochlorococcus.</title>
        <authorList>
            <person name="Kettler G.C."/>
            <person name="Martiny A.C."/>
            <person name="Huang K."/>
            <person name="Zucker J."/>
            <person name="Coleman M.L."/>
            <person name="Rodrigue S."/>
            <person name="Chen F."/>
            <person name="Lapidus A."/>
            <person name="Ferriera S."/>
            <person name="Johnson J."/>
            <person name="Steglich C."/>
            <person name="Church G.M."/>
            <person name="Richardson P."/>
            <person name="Chisholm S.W."/>
        </authorList>
    </citation>
    <scope>NUCLEOTIDE SEQUENCE [LARGE SCALE GENOMIC DNA]</scope>
    <source>
        <strain>MIT 9301</strain>
    </source>
</reference>
<evidence type="ECO:0000255" key="1">
    <source>
        <dbReference type="HAMAP-Rule" id="MF_01416"/>
    </source>
</evidence>
<keyword id="KW-0066">ATP synthesis</keyword>
<keyword id="KW-0139">CF(1)</keyword>
<keyword id="KW-0375">Hydrogen ion transport</keyword>
<keyword id="KW-0406">Ion transport</keyword>
<keyword id="KW-0472">Membrane</keyword>
<keyword id="KW-1185">Reference proteome</keyword>
<keyword id="KW-0793">Thylakoid</keyword>
<keyword id="KW-0813">Transport</keyword>
<feature type="chain" id="PRO_0000371063" description="ATP synthase subunit delta">
    <location>
        <begin position="1"/>
        <end position="180"/>
    </location>
</feature>
<name>ATPD_PROM0</name>
<proteinExistence type="inferred from homology"/>
<accession>A3PEU0</accession>
<sequence length="180" mass="19707">MPLLNSVTTPYAEALLQVVNENSQTEEMVSEVKQLLELINNSPELEKALSSPILETDAKKKIINEIFSKKVNSSLLNFLKLLADRQRIGILTSILDRFLEIYRENSNIALATVTSAVELTDEQKGLITKKIINIAGTEKLELVTKIDPSLIGGFVASVGSKVIDASLASQIRKLGLSLSK</sequence>
<gene>
    <name evidence="1" type="primary">atpH</name>
    <name evidence="1" type="synonym">atpD</name>
    <name type="ordered locus">P9301_16421</name>
</gene>